<proteinExistence type="evidence at protein level"/>
<organism>
    <name type="scientific">Escherichia coli (strain K12)</name>
    <dbReference type="NCBI Taxonomy" id="83333"/>
    <lineage>
        <taxon>Bacteria</taxon>
        <taxon>Pseudomonadati</taxon>
        <taxon>Pseudomonadota</taxon>
        <taxon>Gammaproteobacteria</taxon>
        <taxon>Enterobacterales</taxon>
        <taxon>Enterobacteriaceae</taxon>
        <taxon>Escherichia</taxon>
    </lineage>
</organism>
<dbReference type="EMBL" id="U00096">
    <property type="protein sequence ID" value="AAC74903.1"/>
    <property type="molecule type" value="Genomic_DNA"/>
</dbReference>
<dbReference type="EMBL" id="AP009048">
    <property type="protein sequence ID" value="BAA15641.1"/>
    <property type="molecule type" value="Genomic_DNA"/>
</dbReference>
<dbReference type="PIR" id="A64945">
    <property type="entry name" value="A64945"/>
</dbReference>
<dbReference type="RefSeq" id="NP_416347.1">
    <property type="nucleotide sequence ID" value="NC_000913.3"/>
</dbReference>
<dbReference type="RefSeq" id="WP_001207282.1">
    <property type="nucleotide sequence ID" value="NZ_STEB01000009.1"/>
</dbReference>
<dbReference type="BioGRID" id="4260356">
    <property type="interactions" value="206"/>
</dbReference>
<dbReference type="DIP" id="DIP-48172N"/>
<dbReference type="FunCoup" id="P0AD03">
    <property type="interactions" value="55"/>
</dbReference>
<dbReference type="IntAct" id="P0AD03">
    <property type="interactions" value="2"/>
</dbReference>
<dbReference type="STRING" id="511145.b1833"/>
<dbReference type="TCDB" id="9.A.69.1.2">
    <property type="family name" value="the intermembrane phospholipid translocase (impl-t) family"/>
</dbReference>
<dbReference type="PaxDb" id="511145-b1833"/>
<dbReference type="EnsemblBacteria" id="AAC74903">
    <property type="protein sequence ID" value="AAC74903"/>
    <property type="gene ID" value="b1833"/>
</dbReference>
<dbReference type="GeneID" id="75171904"/>
<dbReference type="GeneID" id="946353"/>
<dbReference type="KEGG" id="ecj:JW1822"/>
<dbReference type="KEGG" id="eco:b1833"/>
<dbReference type="KEGG" id="ecoc:C3026_10445"/>
<dbReference type="PATRIC" id="fig|1411691.4.peg.417"/>
<dbReference type="EchoBASE" id="EB3775"/>
<dbReference type="eggNOG" id="COG2995">
    <property type="taxonomic scope" value="Bacteria"/>
</dbReference>
<dbReference type="HOGENOM" id="CLU_041903_0_1_6"/>
<dbReference type="InParanoid" id="P0AD03"/>
<dbReference type="OMA" id="WVMFDVY"/>
<dbReference type="OrthoDB" id="9800207at2"/>
<dbReference type="PhylomeDB" id="P0AD03"/>
<dbReference type="BioCyc" id="EcoCyc:G7006-MONOMER"/>
<dbReference type="PRO" id="PR:P0AD03"/>
<dbReference type="Proteomes" id="UP000000625">
    <property type="component" value="Chromosome"/>
</dbReference>
<dbReference type="GO" id="GO:0005886">
    <property type="term" value="C:plasma membrane"/>
    <property type="evidence" value="ECO:0000314"/>
    <property type="project" value="EcoCyc"/>
</dbReference>
<dbReference type="GO" id="GO:0046907">
    <property type="term" value="P:intracellular transport"/>
    <property type="evidence" value="ECO:0000269"/>
    <property type="project" value="EcoCyc"/>
</dbReference>
<dbReference type="GO" id="GO:0061024">
    <property type="term" value="P:membrane organization"/>
    <property type="evidence" value="ECO:0000269"/>
    <property type="project" value="EcoCyc"/>
</dbReference>
<dbReference type="GO" id="GO:0009408">
    <property type="term" value="P:response to heat"/>
    <property type="evidence" value="ECO:0000315"/>
    <property type="project" value="EcoCyc"/>
</dbReference>
<dbReference type="InterPro" id="IPR007498">
    <property type="entry name" value="PqiA-like"/>
</dbReference>
<dbReference type="InterPro" id="IPR005219">
    <property type="entry name" value="PqiA-like_proteobact"/>
</dbReference>
<dbReference type="InterPro" id="IPR051800">
    <property type="entry name" value="PqiA-PqiB_transport"/>
</dbReference>
<dbReference type="NCBIfam" id="TIGR00155">
    <property type="entry name" value="pqiA_fam"/>
    <property type="match status" value="1"/>
</dbReference>
<dbReference type="PANTHER" id="PTHR30462">
    <property type="entry name" value="INTERMEMBRANE TRANSPORT PROTEIN PQIB-RELATED"/>
    <property type="match status" value="1"/>
</dbReference>
<dbReference type="PANTHER" id="PTHR30462:SF1">
    <property type="entry name" value="INTERMEMBRANE TRANSPORT PROTEIN YEBS"/>
    <property type="match status" value="1"/>
</dbReference>
<dbReference type="Pfam" id="PF04403">
    <property type="entry name" value="PqiA"/>
    <property type="match status" value="2"/>
</dbReference>
<dbReference type="PROSITE" id="PS51008">
    <property type="entry name" value="MULTIHEME_CYTC"/>
    <property type="match status" value="1"/>
</dbReference>
<protein>
    <recommendedName>
        <fullName evidence="5">Lipophilic envelope-spanning tunnel protein A</fullName>
    </recommendedName>
    <alternativeName>
        <fullName evidence="7">Intermembrane transport protein LetA</fullName>
    </alternativeName>
</protein>
<keyword id="KW-0997">Cell inner membrane</keyword>
<keyword id="KW-1003">Cell membrane</keyword>
<keyword id="KW-0472">Membrane</keyword>
<keyword id="KW-1185">Reference proteome</keyword>
<keyword id="KW-0812">Transmembrane</keyword>
<keyword id="KW-1133">Transmembrane helix</keyword>
<keyword id="KW-0813">Transport</keyword>
<comment type="function">
    <text evidence="3 9">Could be part, together with LetB, of a system that transports lipids between the inner membrane and the outer membrane (Probable). Contributes to membrane integrity (PubMed:27795327).</text>
</comment>
<comment type="subunit">
    <text evidence="8 9">May interact with LetB in the inner membrane.</text>
</comment>
<comment type="subcellular location">
    <subcellularLocation>
        <location evidence="2 3">Cell inner membrane</location>
        <topology evidence="3">Multi-pass membrane protein</topology>
    </subcellularLocation>
</comment>
<comment type="induction">
    <text evidence="3">Induced by a defect in lipopolysaccharide molecules.</text>
</comment>
<comment type="disruption phenotype">
    <text evidence="4">The letAB mutant is not sensitive to lauryl sulfobetaine (LSB), but the pqiAB-letAB double mutant is more sensitive to LSB than the pqiAB mutant (PubMed:28819315). Double mutation also increases sensitivity of the pqiAB mutant to caprylyl sulfobetaine (PubMed:28819315).</text>
</comment>
<comment type="similarity">
    <text evidence="7">Belongs to the PqiA family.</text>
</comment>
<reference key="1">
    <citation type="journal article" date="1996" name="DNA Res.">
        <title>A 460-kb DNA sequence of the Escherichia coli K-12 genome corresponding to the 40.1-50.0 min region on the linkage map.</title>
        <authorList>
            <person name="Itoh T."/>
            <person name="Aiba H."/>
            <person name="Baba T."/>
            <person name="Fujita K."/>
            <person name="Hayashi K."/>
            <person name="Inada T."/>
            <person name="Isono K."/>
            <person name="Kasai H."/>
            <person name="Kimura S."/>
            <person name="Kitakawa M."/>
            <person name="Kitagawa M."/>
            <person name="Makino K."/>
            <person name="Miki T."/>
            <person name="Mizobuchi K."/>
            <person name="Mori H."/>
            <person name="Mori T."/>
            <person name="Motomura K."/>
            <person name="Nakade S."/>
            <person name="Nakamura Y."/>
            <person name="Nashimoto H."/>
            <person name="Nishio Y."/>
            <person name="Oshima T."/>
            <person name="Saito N."/>
            <person name="Sampei G."/>
            <person name="Seki Y."/>
            <person name="Sivasundaram S."/>
            <person name="Tagami H."/>
            <person name="Takeda J."/>
            <person name="Takemoto K."/>
            <person name="Wada C."/>
            <person name="Yamamoto Y."/>
            <person name="Horiuchi T."/>
        </authorList>
    </citation>
    <scope>NUCLEOTIDE SEQUENCE [LARGE SCALE GENOMIC DNA]</scope>
    <source>
        <strain>K12 / W3110 / ATCC 27325 / DSM 5911</strain>
    </source>
</reference>
<reference key="2">
    <citation type="journal article" date="1997" name="Science">
        <title>The complete genome sequence of Escherichia coli K-12.</title>
        <authorList>
            <person name="Blattner F.R."/>
            <person name="Plunkett G. III"/>
            <person name="Bloch C.A."/>
            <person name="Perna N.T."/>
            <person name="Burland V."/>
            <person name="Riley M."/>
            <person name="Collado-Vides J."/>
            <person name="Glasner J.D."/>
            <person name="Rode C.K."/>
            <person name="Mayhew G.F."/>
            <person name="Gregor J."/>
            <person name="Davis N.W."/>
            <person name="Kirkpatrick H.A."/>
            <person name="Goeden M.A."/>
            <person name="Rose D.J."/>
            <person name="Mau B."/>
            <person name="Shao Y."/>
        </authorList>
    </citation>
    <scope>NUCLEOTIDE SEQUENCE [LARGE SCALE GENOMIC DNA]</scope>
    <source>
        <strain>K12 / MG1655 / ATCC 47076</strain>
    </source>
</reference>
<reference key="3">
    <citation type="journal article" date="2006" name="Mol. Syst. Biol.">
        <title>Highly accurate genome sequences of Escherichia coli K-12 strains MG1655 and W3110.</title>
        <authorList>
            <person name="Hayashi K."/>
            <person name="Morooka N."/>
            <person name="Yamamoto Y."/>
            <person name="Fujita K."/>
            <person name="Isono K."/>
            <person name="Choi S."/>
            <person name="Ohtsubo E."/>
            <person name="Baba T."/>
            <person name="Wanner B.L."/>
            <person name="Mori H."/>
            <person name="Horiuchi T."/>
        </authorList>
    </citation>
    <scope>NUCLEOTIDE SEQUENCE [LARGE SCALE GENOMIC DNA]</scope>
    <source>
        <strain>K12 / W3110 / ATCC 27325 / DSM 5911</strain>
    </source>
</reference>
<reference key="4">
    <citation type="journal article" date="2005" name="Science">
        <title>Global topology analysis of the Escherichia coli inner membrane proteome.</title>
        <authorList>
            <person name="Daley D.O."/>
            <person name="Rapp M."/>
            <person name="Granseth E."/>
            <person name="Melen K."/>
            <person name="Drew D."/>
            <person name="von Heijne G."/>
        </authorList>
    </citation>
    <scope>TOPOLOGY [LARGE SCALE ANALYSIS]</scope>
    <scope>SUBCELLULAR LOCATION</scope>
    <source>
        <strain>K12 / MG1655 / ATCC 47076</strain>
    </source>
</reference>
<reference key="5">
    <citation type="journal article" date="2017" name="J. Bacteriol.">
        <title>pqiABC and yebST, putative mce operons of Escherichia coli, encode transport pathways and contribute to membrane integrity.</title>
        <authorList>
            <person name="Nakayama T."/>
            <person name="Zhang-Akiyama Q.M."/>
        </authorList>
    </citation>
    <scope>FUNCTION</scope>
    <scope>SUBUNIT</scope>
    <scope>SUBCELLULAR LOCATION</scope>
    <scope>TOPOLOGY</scope>
    <scope>INDUCTION</scope>
</reference>
<reference key="6">
    <citation type="journal article" date="2017" name="Sci. Rep.">
        <title>MCE domain proteins: conserved inner membrane lipid-binding proteins required for outer membrane homeostasis.</title>
        <authorList>
            <person name="Isom G.L."/>
            <person name="Davies N.J."/>
            <person name="Chong Z.S."/>
            <person name="Bryant J.A."/>
            <person name="Jamshad M."/>
            <person name="Sharif M."/>
            <person name="Cunningham A.F."/>
            <person name="Knowles T.J."/>
            <person name="Chng S.S."/>
            <person name="Cole J.A."/>
            <person name="Henderson I.R."/>
        </authorList>
    </citation>
    <scope>DISRUPTION PHENOTYPE</scope>
</reference>
<reference key="7">
    <citation type="journal article" date="2020" name="Cell">
        <title>LetB Structure Reveals a Tunnel for Lipid Transport across the Bacterial Envelope.</title>
        <authorList>
            <person name="Isom G.L."/>
            <person name="Coudray N."/>
            <person name="MacRae M.R."/>
            <person name="McManus C.T."/>
            <person name="Ekiert D.C."/>
            <person name="Bhabha G."/>
        </authorList>
    </citation>
    <scope>FUNCTION</scope>
    <scope>SUBUNIT</scope>
    <scope>NOMENCLATURE</scope>
</reference>
<evidence type="ECO:0000255" key="1"/>
<evidence type="ECO:0000269" key="2">
    <source>
    </source>
</evidence>
<evidence type="ECO:0000269" key="3">
    <source>
    </source>
</evidence>
<evidence type="ECO:0000269" key="4">
    <source>
    </source>
</evidence>
<evidence type="ECO:0000303" key="5">
    <source>
    </source>
</evidence>
<evidence type="ECO:0000303" key="6">
    <source>
    </source>
</evidence>
<evidence type="ECO:0000305" key="7"/>
<evidence type="ECO:0000305" key="8">
    <source>
    </source>
</evidence>
<evidence type="ECO:0000305" key="9">
    <source>
    </source>
</evidence>
<accession>P0AD03</accession>
<accession>O07977</accession>
<accession>O07979</accession>
<accession>P76271</accession>
<gene>
    <name evidence="5" type="primary">letA</name>
    <name evidence="6" type="synonym">yebS</name>
    <name type="ordered locus">b1833</name>
    <name type="ordered locus">JW1822</name>
</gene>
<sequence length="427" mass="48273">MALNTPQITPTKKITVRAIGEELPRGDYQRCPQCDMLFSLPEINSHQSAYCPRCQAKIRDGRDWSLTRLAAMAFTMLLLMPFAWGEPLLHIWLLGIRIDANVMQGIWQMTKQGDAITGSMVFFCVIGAPLILVTSIAYLWFGNRLGMNLRPVLLMLERLKEWVMLDIYLVGIGVASIKVQDYAHIQAGVGLFSFVALVILTTVTLSHLNVEELWERFYPQRPATRRDEKLRVCLGCHFTGYPDQRGRCPRCHIPLRLRRRHSLQKCWAALLASIVLLLPANLLPISIIYLNGGRQEDTILSGIMSLASSNIAVAGIVFIASILVPFTKVIVMFTLLLSIHFKCQQGLRTRILLLRMVTWIGRWSMLDLFVISLTMSLINRDQILAFTMGPAAFYFGAAVILTILAVEWLDSRLLWDAHESGNARFDD</sequence>
<name>LETA_ECOLI</name>
<feature type="chain" id="PRO_0000169052" description="Lipophilic envelope-spanning tunnel protein A">
    <location>
        <begin position="1"/>
        <end position="427"/>
    </location>
</feature>
<feature type="topological domain" description="Cytoplasmic" evidence="3">
    <location>
        <begin position="1"/>
        <end position="75"/>
    </location>
</feature>
<feature type="transmembrane region" description="Helical" evidence="1">
    <location>
        <begin position="76"/>
        <end position="96"/>
    </location>
</feature>
<feature type="topological domain" description="Periplasmic" evidence="3">
    <location>
        <begin position="97"/>
        <end position="120"/>
    </location>
</feature>
<feature type="transmembrane region" description="Helical" evidence="1">
    <location>
        <begin position="121"/>
        <end position="141"/>
    </location>
</feature>
<feature type="topological domain" description="Cytoplasmic" evidence="3">
    <location>
        <begin position="142"/>
        <end position="269"/>
    </location>
</feature>
<feature type="transmembrane region" description="Helical" evidence="1">
    <location>
        <begin position="270"/>
        <end position="290"/>
    </location>
</feature>
<feature type="topological domain" description="Periplasmic" evidence="3">
    <location>
        <begin position="291"/>
        <end position="310"/>
    </location>
</feature>
<feature type="transmembrane region" description="Helical" evidence="1">
    <location>
        <begin position="311"/>
        <end position="331"/>
    </location>
</feature>
<feature type="topological domain" description="Cytoplasmic" evidence="3">
    <location>
        <begin position="332"/>
        <end position="350"/>
    </location>
</feature>
<feature type="transmembrane region" description="Helical" evidence="1">
    <location>
        <begin position="351"/>
        <end position="371"/>
    </location>
</feature>
<feature type="topological domain" description="Periplasmic" evidence="3">
    <location>
        <begin position="372"/>
        <end position="382"/>
    </location>
</feature>
<feature type="transmembrane region" description="Helical" evidence="1">
    <location>
        <begin position="383"/>
        <end position="403"/>
    </location>
</feature>
<feature type="topological domain" description="Cytoplasmic" evidence="2 3">
    <location>
        <begin position="404"/>
        <end position="427"/>
    </location>
</feature>